<sequence>MVLEVSDHQVLNDAEVAALLENFSSSYDYGENESDSCCTSPPCPQDFSLNFDRAFLPALYSLLFLLGLLGNGAVAAVLLSRRTALSSTDTFLLHLAVADTLLVLTLPLWAVDAAVQWVFGSGLCKVAGALFNINFYAGALLLACISFDRYLNIVHATQLYRRGPPARVTLTCLAVWGLCLLFALPDFIFLSAHHDERLNATHCQYNFPQVGRTALRVLQLVAGFLLPLLVMAYCYAHILAVLLVSRGQRRLRAMRLVVVVVVAFALCWTPYHLVVLVDILMDLGALARNCGRESRVDVAKSVTSGLGYMHCCLNPLLYAFVGVKFRERMWMLLLRLGCPNQRGLQRQPSSSRRDSSWSETSEASYSGL</sequence>
<accession>P49682</accession>
<accession>B2R982</accession>
<accession>O15185</accession>
<accession>Q7Z710</accession>
<accession>Q9P2T4</accession>
<accession>Q9P2T5</accession>
<comment type="function">
    <molecule>Isoform 1</molecule>
    <text evidence="5 7 10">Receptor for the C-X-C chemokine CXCL9, CXCL10 and CXCL11 and mediates the proliferation, survival and angiogenic activity of human mesangial cells (HMC) through a heterotrimeric G-protein signaling pathway (PubMed:12782716). Binds to CCL21. Probably promotes cell chemotaxis response. Upon activation by PF4, induces activated T-lymphocytes migration mediated via downstream Ras/extracellular signal-regulated kinase (ERK) signaling.</text>
</comment>
<comment type="function">
    <molecule>Isoform 2</molecule>
    <text evidence="5">Receptor for the C-X-C chemokine CXCL4 and also mediates the inhibitory activities of CXCL9, CXCL10 and CXCL11 on the proliferation, survival and angiogenic activity of human microvascular endothelial cells (HMVEC) through a cAMP-mediated signaling pathway (PubMed:12782716). Does not promote cell chemotaxis respons. Interaction with CXCL4 or CXCL10 leads to activation of the p38MAPK pathway and contributes to inhibition of angiogenesis. Overexpression in renal cancer cells down-regulates expression of the anti-apoptotic protein HMOX1 and promotes apoptosis.</text>
</comment>
<comment type="function">
    <molecule>Isoform 3</molecule>
    <text>Mediates the activity of CXCL11.</text>
</comment>
<comment type="subunit">
    <text evidence="9">Homomer. Forms heteromers with ACKR4.</text>
</comment>
<comment type="subunit">
    <molecule>Isoform 1</molecule>
    <text evidence="7">Interacts with PF4/CXCL4.</text>
</comment>
<comment type="subunit">
    <molecule>Isoform 2</molecule>
    <text evidence="7">Interacts with PF4/CXCL4.</text>
</comment>
<comment type="interaction">
    <interactant intactId="EBI-12836456">
        <id>P49682</id>
    </interactant>
    <interactant intactId="EBI-12822627">
        <id>O14523</id>
        <label>C2CD2L</label>
    </interactant>
    <organismsDiffer>false</organismsDiffer>
    <experiments>3</experiments>
</comment>
<comment type="interaction">
    <interactant intactId="EBI-12836456">
        <id>P49682</id>
    </interactant>
    <interactant intactId="EBI-12256978">
        <id>Q8N6F1-2</id>
        <label>CLDN19</label>
    </interactant>
    <organismsDiffer>false</organismsDiffer>
    <experiments>3</experiments>
</comment>
<comment type="interaction">
    <interactant intactId="EBI-12836456">
        <id>P49682</id>
    </interactant>
    <interactant intactId="EBI-489411">
        <id>P61073</id>
        <label>CXCR4</label>
    </interactant>
    <organismsDiffer>false</organismsDiffer>
    <experiments>5</experiments>
</comment>
<comment type="interaction">
    <interactant intactId="EBI-12836456">
        <id>P49682</id>
    </interactant>
    <interactant intactId="EBI-2800360">
        <id>Q9Y6G1</id>
        <label>TMEM14A</label>
    </interactant>
    <organismsDiffer>false</organismsDiffer>
    <experiments>3</experiments>
</comment>
<comment type="interaction">
    <interactant intactId="EBI-16432539">
        <id>P49682-3</id>
    </interactant>
    <interactant intactId="EBI-743099">
        <id>Q969F0</id>
        <label>FATE1</label>
    </interactant>
    <organismsDiffer>false</organismsDiffer>
    <experiments>3</experiments>
</comment>
<comment type="subcellular location">
    <molecule>Isoform 1</molecule>
    <subcellularLocation>
        <location evidence="5">Cell membrane</location>
        <topology evidence="5">Multi-pass membrane protein</topology>
    </subcellularLocation>
</comment>
<comment type="subcellular location">
    <molecule>Isoform 2</molecule>
    <subcellularLocation>
        <location evidence="5">Cell membrane</location>
        <topology evidence="5">Multi-pass membrane protein</topology>
    </subcellularLocation>
</comment>
<comment type="alternative products">
    <event type="alternative splicing"/>
    <isoform>
        <id>P49682-1</id>
        <name>1</name>
        <name>CXCR3-A</name>
        <sequence type="displayed"/>
    </isoform>
    <isoform>
        <id>P49682-2</id>
        <name>2</name>
        <name>CXCR3-B</name>
        <sequence type="described" ref="VSP_015684"/>
    </isoform>
    <isoform>
        <id>P49682-3</id>
        <name>3</name>
        <name>CXCR3-alt</name>
        <sequence type="described" ref="VSP_015685"/>
    </isoform>
</comment>
<comment type="tissue specificity">
    <text evidence="5 9">Isoform 1 and isoform 2 are mainly expressed in heart, kidney, liver and skeletal muscle. Isoform 1 is also expressed in placenta. Isoform 2 is expressed in endothelial cells. Expressed in T-cells (at protein level).</text>
</comment>
<comment type="PTM">
    <text evidence="6 8">Sulfation on Tyr-27 and Tyr-29 is essential for CXCL10 binding and subsequent signal transduction induction.</text>
</comment>
<comment type="PTM">
    <text>N-glycosylated.</text>
</comment>
<comment type="miscellaneous">
    <molecule>Isoform 3</molecule>
    <text evidence="13">Due to exon skipping.</text>
</comment>
<comment type="similarity">
    <text evidence="2">Belongs to the G-protein coupled receptor 1 family.</text>
</comment>
<comment type="online information" name="Atlas of Genetics and Cytogenetics in Oncology and Haematology">
    <link uri="https://atlasgeneticsoncology.org/gene/40224/CXCR3"/>
</comment>
<comment type="online information" name="Wikipedia">
    <link uri="https://en.wikipedia.org/wiki/CXC_chemokine_receptors"/>
    <text>CXC chemokine receptors entry</text>
</comment>
<organism>
    <name type="scientific">Homo sapiens</name>
    <name type="common">Human</name>
    <dbReference type="NCBI Taxonomy" id="9606"/>
    <lineage>
        <taxon>Eukaryota</taxon>
        <taxon>Metazoa</taxon>
        <taxon>Chordata</taxon>
        <taxon>Craniata</taxon>
        <taxon>Vertebrata</taxon>
        <taxon>Euteleostomi</taxon>
        <taxon>Mammalia</taxon>
        <taxon>Eutheria</taxon>
        <taxon>Euarchontoglires</taxon>
        <taxon>Primates</taxon>
        <taxon>Haplorrhini</taxon>
        <taxon>Catarrhini</taxon>
        <taxon>Hominidae</taxon>
        <taxon>Homo</taxon>
    </lineage>
</organism>
<keyword id="KW-0002">3D-structure</keyword>
<keyword id="KW-0025">Alternative splicing</keyword>
<keyword id="KW-0037">Angiogenesis</keyword>
<keyword id="KW-0053">Apoptosis</keyword>
<keyword id="KW-1003">Cell membrane</keyword>
<keyword id="KW-0145">Chemotaxis</keyword>
<keyword id="KW-1015">Disulfide bond</keyword>
<keyword id="KW-0297">G-protein coupled receptor</keyword>
<keyword id="KW-0325">Glycoprotein</keyword>
<keyword id="KW-0472">Membrane</keyword>
<keyword id="KW-1267">Proteomics identification</keyword>
<keyword id="KW-0675">Receptor</keyword>
<keyword id="KW-1185">Reference proteome</keyword>
<keyword id="KW-0765">Sulfation</keyword>
<keyword id="KW-0807">Transducer</keyword>
<keyword id="KW-0812">Transmembrane</keyword>
<keyword id="KW-1133">Transmembrane helix</keyword>
<feature type="chain" id="PRO_0000069346" description="C-X-C chemokine receptor type 3">
    <location>
        <begin position="1"/>
        <end position="368"/>
    </location>
</feature>
<feature type="topological domain" description="Extracellular" evidence="1">
    <location>
        <begin position="1"/>
        <end position="53"/>
    </location>
</feature>
<feature type="transmembrane region" description="Helical; Name=1" evidence="1">
    <location>
        <begin position="54"/>
        <end position="80"/>
    </location>
</feature>
<feature type="topological domain" description="Cytoplasmic" evidence="1">
    <location>
        <begin position="81"/>
        <end position="89"/>
    </location>
</feature>
<feature type="transmembrane region" description="Helical; Name=2" evidence="1">
    <location>
        <begin position="90"/>
        <end position="110"/>
    </location>
</feature>
<feature type="topological domain" description="Extracellular" evidence="1">
    <location>
        <begin position="111"/>
        <end position="125"/>
    </location>
</feature>
<feature type="transmembrane region" description="Helical; Name=3" evidence="1">
    <location>
        <begin position="126"/>
        <end position="147"/>
    </location>
</feature>
<feature type="topological domain" description="Cytoplasmic" evidence="1">
    <location>
        <begin position="148"/>
        <end position="169"/>
    </location>
</feature>
<feature type="transmembrane region" description="Helical; Name=4" evidence="1">
    <location>
        <begin position="170"/>
        <end position="189"/>
    </location>
</feature>
<feature type="topological domain" description="Extracellular" evidence="1">
    <location>
        <begin position="190"/>
        <end position="212"/>
    </location>
</feature>
<feature type="transmembrane region" description="Helical; Name=5" evidence="1">
    <location>
        <begin position="213"/>
        <end position="233"/>
    </location>
</feature>
<feature type="topological domain" description="Cytoplasmic" evidence="1">
    <location>
        <begin position="234"/>
        <end position="255"/>
    </location>
</feature>
<feature type="transmembrane region" description="Helical; Name=6" evidence="1">
    <location>
        <begin position="256"/>
        <end position="277"/>
    </location>
</feature>
<feature type="topological domain" description="Extracellular" evidence="1">
    <location>
        <begin position="278"/>
        <end position="298"/>
    </location>
</feature>
<feature type="transmembrane region" description="Helical; Name=7" evidence="1">
    <location>
        <begin position="299"/>
        <end position="321"/>
    </location>
</feature>
<feature type="topological domain" description="Cytoplasmic" evidence="1">
    <location>
        <begin position="322"/>
        <end position="368"/>
    </location>
</feature>
<feature type="region of interest" description="Disordered" evidence="3">
    <location>
        <begin position="342"/>
        <end position="368"/>
    </location>
</feature>
<feature type="compositionally biased region" description="Low complexity" evidence="3">
    <location>
        <begin position="357"/>
        <end position="368"/>
    </location>
</feature>
<feature type="modified residue" description="Sulfotyrosine" evidence="6 8">
    <location>
        <position position="27"/>
    </location>
</feature>
<feature type="modified residue" description="Sulfotyrosine" evidence="8">
    <location>
        <position position="29"/>
    </location>
</feature>
<feature type="glycosylation site" description="N-linked (GlcNAc...) asparagine" evidence="1">
    <location>
        <position position="22"/>
    </location>
</feature>
<feature type="glycosylation site" description="N-linked (GlcNAc...) asparagine" evidence="1">
    <location>
        <position position="32"/>
    </location>
</feature>
<feature type="disulfide bond" evidence="2">
    <location>
        <begin position="124"/>
        <end position="203"/>
    </location>
</feature>
<feature type="splice variant" id="VSP_015684" description="In isoform 2." evidence="11 12">
    <original>MVLE</original>
    <variation>MELRKYGPGRLAGTVIGGAAQSKSQTKSDSITKEFLPGLYTAPSSPFPPSQ</variation>
    <location>
        <begin position="1"/>
        <end position="4"/>
    </location>
</feature>
<feature type="splice variant" id="VSP_015685" description="In isoform 3." evidence="13">
    <original>VGRTALRVLQLVAGFLLPLLVMAYCYAHILAVLLVSRGQRRLRAMRLVVVVVVAFALCWTPYHLVVLVDILMDLGALARNCGRESRVDVAKSVTSGLGYMHCCLNPLLYAFVGVKFRERMWMLLLRLGCPNQRGLQRQPSSSRRDSSWSETSEASYSGL</original>
    <variation>GSSSGSGCGCCSCAWAAPTREGSRGSHRLPAGIHPGLRPQRPPTRACEAGIRAPLSPI</variation>
    <location>
        <begin position="210"/>
        <end position="368"/>
    </location>
</feature>
<feature type="sequence variant" id="VAR_016240" description="In dbSNP:rs139226823." evidence="4">
    <original>R</original>
    <variation>Q</variation>
    <location>
        <position position="292"/>
    </location>
</feature>
<feature type="sequence variant" id="VAR_016241" description="In dbSNP:rs766348940." evidence="4">
    <original>A</original>
    <variation>T</variation>
    <location>
        <position position="363"/>
    </location>
</feature>
<feature type="mutagenesis site" description="Reduces binding to CXCL10 and CXCL11, and reduces CXCL10- and CXCL11-induced chemotaxis and activation. Does not affect CXCL9-induced chemotaxis and activation." evidence="6">
    <location>
        <begin position="1"/>
        <end position="16"/>
    </location>
</feature>
<feature type="mutagenesis site" description="Does not affect binding to CXCL9, CXCL10 and CXCL11 or activation." evidence="6">
    <original>E</original>
    <variation>K</variation>
    <location>
        <position position="4"/>
    </location>
</feature>
<feature type="mutagenesis site" description="Reduces slightly CXCL9-, CXCL10- and CXCL11-induced chemotaxis." evidence="6">
    <original>E</original>
    <variation>K</variation>
    <location>
        <position position="21"/>
    </location>
</feature>
<feature type="mutagenesis site" description="Abolishes binding to CXCL10 and CXCL11 and CXCL9-, CXCL10- and CXCL11-induced chemotaxis." evidence="6">
    <original>YDY</original>
    <variation>ADA</variation>
    <location>
        <begin position="27"/>
        <end position="29"/>
    </location>
</feature>
<feature type="mutagenesis site" description="Reduces sulfation and CXCL9-, CXCL10- and CXCL11-induced chemotaxis. Abolishes binding to CXCL10. Abolishes sulfation, binding to CXCL11, ligand-induced receptor internalization and CXCL9-, CXCL10- and CXCL11-induced chemotaxis; when associated with F-29." evidence="6 8">
    <original>Y</original>
    <variation>F</variation>
    <location>
        <position position="27"/>
    </location>
</feature>
<feature type="mutagenesis site" description="Reduces sulfation, binding to CXCL10 and CXCL9-, CXCL10- and CXCL11-induced chemotaxis. Abolishes sulfation, binding to CXCL10 and CXCL11 and CXCL9-, CXCL10- and CXCL11-induced chemotaxis; when associated with F-27." evidence="6 8">
    <original>Y</original>
    <variation>F</variation>
    <location>
        <position position="29"/>
    </location>
</feature>
<feature type="mutagenesis site" description="Abolishes binding to CXCL10 and CXCL11. Reduces CXCL9-, CXCL10- and CXCL11-induced chemotaxis." evidence="6">
    <original>D</original>
    <variation>A</variation>
    <location>
        <position position="112"/>
    </location>
</feature>
<feature type="mutagenesis site" description="Abolishes binding to CXCL10 and CXCL11 and CXCL10- and CXCL11-induced chemotaxis. Reduces CXCL9-induced chemotaxis." evidence="6">
    <original>D</original>
    <variation>K</variation>
    <location>
        <position position="112"/>
    </location>
</feature>
<feature type="mutagenesis site" description="Abolishes binding to CXCL10 and CXCL11 and CXCL9-, CXCL10- and CXCL11-induced chemotaxis. Reduces ligand-induced receptor internalization." evidence="6">
    <original>R</original>
    <variation>A</variation>
    <location>
        <position position="197"/>
    </location>
</feature>
<feature type="mutagenesis site" description="Abolishes CXCL10-induced chemotaxis. Reduces CXCL9- and CXCL11-induced chemotaxis. Does not affect binding to CXCL10 and CXCL11." evidence="6">
    <original>R</original>
    <variation>A</variation>
    <location>
        <position position="212"/>
    </location>
</feature>
<feature type="mutagenesis site" description="Reduces CXCL9-, CXCL10- and CXCL11-induced chemotaxis. Does not affect binding to CXCL10 and CXCL11 or receptor internalization." evidence="6">
    <original>R</original>
    <variation>A</variation>
    <location>
        <position position="216"/>
    </location>
</feature>
<feature type="mutagenesis site" description="Abolishes binding to CXCL10 and CXCL11 and CXCL11-induced chemotaxis. Reduces CXCL9 and CXCL10-induced chemotaxis." evidence="6">
    <original>D</original>
    <variation>A</variation>
    <location>
        <position position="278"/>
    </location>
</feature>
<feature type="mutagenesis site" description="Abolishes binding to CXCL10 and CXCL11 and CXCL9-, CXCL10- and CXCL11-induced chemotaxis." evidence="6">
    <original>D</original>
    <variation>K</variation>
    <location>
        <position position="278"/>
    </location>
</feature>
<feature type="mutagenesis site" description="Reduces binding to CXCL10 and CXCL9-, CXCL10- and CXCL11-induced chemotaxis. Abolishes binding to CXCL11." evidence="6">
    <original>D</original>
    <variation>A</variation>
    <location>
        <position position="282"/>
    </location>
</feature>
<feature type="mutagenesis site" description="Reduces binding to CXCL10 and CXCL11 and CXCL9-, CXCL10- and CXCL11-induced chemotaxis." evidence="6">
    <original>D</original>
    <variation>K</variation>
    <location>
        <position position="282"/>
    </location>
</feature>
<feature type="mutagenesis site" description="Reduces binding to CXCL10 and CXCL9- and CXCL11-induced chemotaxis. Abolishes binding to CXCL11 and CXCL10-induced chemotaxis." evidence="6">
    <original>E</original>
    <variation>A</variation>
    <location>
        <position position="293"/>
    </location>
</feature>
<feature type="mutagenesis site" description="Abolishes binding to CXCL10 and CXCL11 and CXCL9-, CXCL10- and CXCL11-induced chemotaxis." evidence="6">
    <original>E</original>
    <variation>K</variation>
    <location>
        <position position="293"/>
    </location>
</feature>
<feature type="sequence conflict" description="In Ref. 4; CAB02143." evidence="13" ref="4">
    <original>A</original>
    <variation>R</variation>
    <location>
        <position position="75"/>
    </location>
</feature>
<feature type="sequence conflict" description="In Ref. 6; BAG36429." evidence="13" ref="6">
    <original>T</original>
    <variation>I</variation>
    <location>
        <position position="157"/>
    </location>
</feature>
<feature type="helix" evidence="15">
    <location>
        <begin position="61"/>
        <end position="80"/>
    </location>
</feature>
<feature type="turn" evidence="16">
    <location>
        <begin position="81"/>
        <end position="83"/>
    </location>
</feature>
<feature type="helix" evidence="15">
    <location>
        <begin position="88"/>
        <end position="114"/>
    </location>
</feature>
<feature type="helix" evidence="15">
    <location>
        <begin position="122"/>
        <end position="154"/>
    </location>
</feature>
<feature type="helix" evidence="15">
    <location>
        <begin position="156"/>
        <end position="162"/>
    </location>
</feature>
<feature type="helix" evidence="15">
    <location>
        <begin position="169"/>
        <end position="183"/>
    </location>
</feature>
<feature type="helix" evidence="15">
    <location>
        <begin position="187"/>
        <end position="189"/>
    </location>
</feature>
<feature type="strand" evidence="15">
    <location>
        <begin position="190"/>
        <end position="193"/>
    </location>
</feature>
<feature type="turn" evidence="14">
    <location>
        <begin position="196"/>
        <end position="199"/>
    </location>
</feature>
<feature type="strand" evidence="15">
    <location>
        <begin position="202"/>
        <end position="205"/>
    </location>
</feature>
<feature type="helix" evidence="15">
    <location>
        <begin position="209"/>
        <end position="244"/>
    </location>
</feature>
<feature type="helix" evidence="15">
    <location>
        <begin position="249"/>
        <end position="281"/>
    </location>
</feature>
<feature type="turn" evidence="15">
    <location>
        <begin position="282"/>
        <end position="284"/>
    </location>
</feature>
<feature type="helix" evidence="15">
    <location>
        <begin position="290"/>
        <end position="318"/>
    </location>
</feature>
<feature type="turn" evidence="15">
    <location>
        <begin position="319"/>
        <end position="321"/>
    </location>
</feature>
<feature type="helix" evidence="15">
    <location>
        <begin position="323"/>
        <end position="334"/>
    </location>
</feature>
<proteinExistence type="evidence at protein level"/>
<evidence type="ECO:0000255" key="1"/>
<evidence type="ECO:0000255" key="2">
    <source>
        <dbReference type="PROSITE-ProRule" id="PRU00521"/>
    </source>
</evidence>
<evidence type="ECO:0000256" key="3">
    <source>
        <dbReference type="SAM" id="MobiDB-lite"/>
    </source>
</evidence>
<evidence type="ECO:0000269" key="4">
    <source>
    </source>
</evidence>
<evidence type="ECO:0000269" key="5">
    <source>
    </source>
</evidence>
<evidence type="ECO:0000269" key="6">
    <source>
    </source>
</evidence>
<evidence type="ECO:0000269" key="7">
    <source>
    </source>
</evidence>
<evidence type="ECO:0000269" key="8">
    <source>
    </source>
</evidence>
<evidence type="ECO:0000269" key="9">
    <source>
    </source>
</evidence>
<evidence type="ECO:0000269" key="10">
    <source>
    </source>
</evidence>
<evidence type="ECO:0000303" key="11">
    <source>
    </source>
</evidence>
<evidence type="ECO:0000303" key="12">
    <source>
    </source>
</evidence>
<evidence type="ECO:0000305" key="13"/>
<evidence type="ECO:0007829" key="14">
    <source>
        <dbReference type="PDB" id="8HNL"/>
    </source>
</evidence>
<evidence type="ECO:0007829" key="15">
    <source>
        <dbReference type="PDB" id="8HNM"/>
    </source>
</evidence>
<evidence type="ECO:0007829" key="16">
    <source>
        <dbReference type="PDB" id="8K2W"/>
    </source>
</evidence>
<name>CXCR3_HUMAN</name>
<gene>
    <name type="primary">CXCR3</name>
    <name type="synonym">GPR9</name>
</gene>
<protein>
    <recommendedName>
        <fullName>C-X-C chemokine receptor type 3</fullName>
        <shortName>CXC-R3</shortName>
        <shortName>CXCR-3</shortName>
    </recommendedName>
    <alternativeName>
        <fullName>CKR-L2</fullName>
    </alternativeName>
    <alternativeName>
        <fullName>G protein-coupled receptor 9</fullName>
    </alternativeName>
    <alternativeName>
        <fullName>Interferon-inducible protein 10 receptor</fullName>
        <shortName>IP-10 receptor</shortName>
    </alternativeName>
    <cdAntigenName>CD183</cdAntigenName>
</protein>
<dbReference type="EMBL" id="X95876">
    <property type="protein sequence ID" value="CAA65126.1"/>
    <property type="molecule type" value="mRNA"/>
</dbReference>
<dbReference type="EMBL" id="AF469635">
    <property type="protein sequence ID" value="AAP55851.1"/>
    <property type="molecule type" value="mRNA"/>
</dbReference>
<dbReference type="EMBL" id="Z79783">
    <property type="protein sequence ID" value="CAB02143.1"/>
    <property type="molecule type" value="Genomic_DNA"/>
</dbReference>
<dbReference type="EMBL" id="AY242128">
    <property type="protein sequence ID" value="AAO92295.1"/>
    <property type="molecule type" value="mRNA"/>
</dbReference>
<dbReference type="EMBL" id="AK313679">
    <property type="protein sequence ID" value="BAG36429.1"/>
    <property type="molecule type" value="mRNA"/>
</dbReference>
<dbReference type="EMBL" id="BC034403">
    <property type="protein sequence ID" value="AAH34403.1"/>
    <property type="molecule type" value="mRNA"/>
</dbReference>
<dbReference type="EMBL" id="U32674">
    <property type="protein sequence ID" value="AAC50505.1"/>
    <property type="molecule type" value="Genomic_DNA"/>
</dbReference>
<dbReference type="EMBL" id="AB032735">
    <property type="protein sequence ID" value="BAA92297.1"/>
    <property type="molecule type" value="Genomic_DNA"/>
</dbReference>
<dbReference type="EMBL" id="AB032736">
    <property type="protein sequence ID" value="BAA92298.1"/>
    <property type="molecule type" value="Genomic_DNA"/>
</dbReference>
<dbReference type="CCDS" id="CCDS14416.1">
    <molecule id="P49682-1"/>
</dbReference>
<dbReference type="CCDS" id="CCDS48135.1">
    <molecule id="P49682-2"/>
</dbReference>
<dbReference type="RefSeq" id="NP_001136269.1">
    <molecule id="P49682-2"/>
    <property type="nucleotide sequence ID" value="NM_001142797.2"/>
</dbReference>
<dbReference type="RefSeq" id="NP_001495.1">
    <molecule id="P49682-1"/>
    <property type="nucleotide sequence ID" value="NM_001504.2"/>
</dbReference>
<dbReference type="RefSeq" id="XP_016884924.1">
    <molecule id="P49682-2"/>
    <property type="nucleotide sequence ID" value="XM_017029435.2"/>
</dbReference>
<dbReference type="RefSeq" id="XP_054182846.1">
    <molecule id="P49682-2"/>
    <property type="nucleotide sequence ID" value="XM_054326871.1"/>
</dbReference>
<dbReference type="PDB" id="8HNK">
    <property type="method" value="EM"/>
    <property type="resolution" value="3.01 A"/>
    <property type="chains" value="R=1-361"/>
</dbReference>
<dbReference type="PDB" id="8HNL">
    <property type="method" value="EM"/>
    <property type="resolution" value="2.98 A"/>
    <property type="chains" value="R=1-361"/>
</dbReference>
<dbReference type="PDB" id="8HNM">
    <property type="method" value="EM"/>
    <property type="resolution" value="2.94 A"/>
    <property type="chains" value="R=1-361"/>
</dbReference>
<dbReference type="PDB" id="8HNN">
    <property type="method" value="EM"/>
    <property type="resolution" value="3.60 A"/>
    <property type="chains" value="R=1-240, R=258-361"/>
</dbReference>
<dbReference type="PDB" id="8K2W">
    <property type="method" value="EM"/>
    <property type="resolution" value="3.00 A"/>
    <property type="chains" value="R=1-240, R=258-361"/>
</dbReference>
<dbReference type="PDB" id="8K2X">
    <property type="method" value="EM"/>
    <property type="resolution" value="3.20 A"/>
    <property type="chains" value="R=1-361"/>
</dbReference>
<dbReference type="PDB" id="8XXY">
    <property type="method" value="EM"/>
    <property type="resolution" value="3.68 A"/>
    <property type="chains" value="R=2-368"/>
</dbReference>
<dbReference type="PDB" id="8XXZ">
    <property type="method" value="EM"/>
    <property type="resolution" value="3.30 A"/>
    <property type="chains" value="R=2-368"/>
</dbReference>
<dbReference type="PDB" id="8XYI">
    <property type="method" value="EM"/>
    <property type="resolution" value="3.16 A"/>
    <property type="chains" value="R=2-368"/>
</dbReference>
<dbReference type="PDB" id="8XYK">
    <property type="method" value="EM"/>
    <property type="resolution" value="3.03 A"/>
    <property type="chains" value="R=2-368"/>
</dbReference>
<dbReference type="PDB" id="8Y0H">
    <property type="method" value="EM"/>
    <property type="resolution" value="3.53 A"/>
    <property type="chains" value="R=2-368"/>
</dbReference>
<dbReference type="PDB" id="8Y0N">
    <property type="method" value="EM"/>
    <property type="resolution" value="3.07 A"/>
    <property type="chains" value="R=2-368"/>
</dbReference>
<dbReference type="PDBsum" id="8HNK"/>
<dbReference type="PDBsum" id="8HNL"/>
<dbReference type="PDBsum" id="8HNM"/>
<dbReference type="PDBsum" id="8HNN"/>
<dbReference type="PDBsum" id="8K2W"/>
<dbReference type="PDBsum" id="8K2X"/>
<dbReference type="PDBsum" id="8XXY"/>
<dbReference type="PDBsum" id="8XXZ"/>
<dbReference type="PDBsum" id="8XYI"/>
<dbReference type="PDBsum" id="8XYK"/>
<dbReference type="PDBsum" id="8Y0H"/>
<dbReference type="PDBsum" id="8Y0N"/>
<dbReference type="EMDB" id="EMD-34917"/>
<dbReference type="EMDB" id="EMD-36841"/>
<dbReference type="EMDB" id="EMD-38765"/>
<dbReference type="EMDB" id="EMD-38766"/>
<dbReference type="EMDB" id="EMD-38774"/>
<dbReference type="EMDB" id="EMD-38776"/>
<dbReference type="EMDB" id="EMD-38803"/>
<dbReference type="EMDB" id="EMD-38809"/>
<dbReference type="SMR" id="P49682"/>
<dbReference type="BioGRID" id="109094">
    <property type="interactions" value="498"/>
</dbReference>
<dbReference type="CORUM" id="P49682"/>
<dbReference type="DIP" id="DIP-5891N"/>
<dbReference type="FunCoup" id="P49682">
    <property type="interactions" value="827"/>
</dbReference>
<dbReference type="IntAct" id="P49682">
    <property type="interactions" value="9"/>
</dbReference>
<dbReference type="STRING" id="9606.ENSP00000362795"/>
<dbReference type="BindingDB" id="P49682"/>
<dbReference type="ChEMBL" id="CHEMBL4441"/>
<dbReference type="GuidetoPHARMACOLOGY" id="70"/>
<dbReference type="GlyCosmos" id="P49682">
    <property type="glycosylation" value="2 sites, No reported glycans"/>
</dbReference>
<dbReference type="GlyGen" id="P49682">
    <property type="glycosylation" value="2 sites"/>
</dbReference>
<dbReference type="iPTMnet" id="P49682"/>
<dbReference type="PhosphoSitePlus" id="P49682"/>
<dbReference type="BioMuta" id="CXCR3"/>
<dbReference type="DMDM" id="2829400"/>
<dbReference type="jPOST" id="P49682"/>
<dbReference type="MassIVE" id="P49682"/>
<dbReference type="PaxDb" id="9606-ENSP00000362795"/>
<dbReference type="PeptideAtlas" id="P49682"/>
<dbReference type="ProteomicsDB" id="56047">
    <molecule id="P49682-1"/>
</dbReference>
<dbReference type="ProteomicsDB" id="56048">
    <molecule id="P49682-2"/>
</dbReference>
<dbReference type="Antibodypedia" id="566">
    <property type="antibodies" value="1174 antibodies from 47 providers"/>
</dbReference>
<dbReference type="DNASU" id="2833"/>
<dbReference type="Ensembl" id="ENST00000373691.4">
    <molecule id="P49682-2"/>
    <property type="protein sequence ID" value="ENSP00000362795.4"/>
    <property type="gene ID" value="ENSG00000186810.8"/>
</dbReference>
<dbReference type="Ensembl" id="ENST00000373693.4">
    <molecule id="P49682-1"/>
    <property type="protein sequence ID" value="ENSP00000362797.3"/>
    <property type="gene ID" value="ENSG00000186810.8"/>
</dbReference>
<dbReference type="GeneID" id="2833"/>
<dbReference type="KEGG" id="hsa:2833"/>
<dbReference type="MANE-Select" id="ENST00000373693.4">
    <property type="protein sequence ID" value="ENSP00000362797.3"/>
    <property type="RefSeq nucleotide sequence ID" value="NM_001504.2"/>
    <property type="RefSeq protein sequence ID" value="NP_001495.1"/>
</dbReference>
<dbReference type="UCSC" id="uc004eaf.3">
    <molecule id="P49682-1"/>
    <property type="organism name" value="human"/>
</dbReference>
<dbReference type="AGR" id="HGNC:4540"/>
<dbReference type="CTD" id="2833"/>
<dbReference type="DisGeNET" id="2833"/>
<dbReference type="GeneCards" id="CXCR3"/>
<dbReference type="HGNC" id="HGNC:4540">
    <property type="gene designation" value="CXCR3"/>
</dbReference>
<dbReference type="HPA" id="ENSG00000186810">
    <property type="expression patterns" value="Tissue enhanced (bone marrow, intestine, lymphoid tissue)"/>
</dbReference>
<dbReference type="MalaCards" id="CXCR3"/>
<dbReference type="MIM" id="300574">
    <property type="type" value="gene"/>
</dbReference>
<dbReference type="neXtProt" id="NX_P49682"/>
<dbReference type="OpenTargets" id="ENSG00000186810"/>
<dbReference type="PharmGKB" id="PA35049"/>
<dbReference type="VEuPathDB" id="HostDB:ENSG00000186810"/>
<dbReference type="eggNOG" id="KOG3656">
    <property type="taxonomic scope" value="Eukaryota"/>
</dbReference>
<dbReference type="GeneTree" id="ENSGT01050000244848"/>
<dbReference type="HOGENOM" id="CLU_009579_8_3_1"/>
<dbReference type="InParanoid" id="P49682"/>
<dbReference type="OMA" id="LICISFE"/>
<dbReference type="OrthoDB" id="9818824at2759"/>
<dbReference type="PAN-GO" id="P49682">
    <property type="GO annotations" value="7 GO annotations based on evolutionary models"/>
</dbReference>
<dbReference type="PhylomeDB" id="P49682"/>
<dbReference type="TreeFam" id="TF330966"/>
<dbReference type="PathwayCommons" id="P49682"/>
<dbReference type="Reactome" id="R-HSA-380108">
    <property type="pathway name" value="Chemokine receptors bind chemokines"/>
</dbReference>
<dbReference type="Reactome" id="R-HSA-418594">
    <property type="pathway name" value="G alpha (i) signalling events"/>
</dbReference>
<dbReference type="SignaLink" id="P49682"/>
<dbReference type="SIGNOR" id="P49682"/>
<dbReference type="BioGRID-ORCS" id="2833">
    <property type="hits" value="16 hits in 765 CRISPR screens"/>
</dbReference>
<dbReference type="GeneWiki" id="CXCR3"/>
<dbReference type="GenomeRNAi" id="2833"/>
<dbReference type="Pharos" id="P49682">
    <property type="development level" value="Tchem"/>
</dbReference>
<dbReference type="PRO" id="PR:P49682"/>
<dbReference type="Proteomes" id="UP000005640">
    <property type="component" value="Chromosome X"/>
</dbReference>
<dbReference type="RNAct" id="P49682">
    <property type="molecule type" value="protein"/>
</dbReference>
<dbReference type="Bgee" id="ENSG00000186810">
    <property type="expression patterns" value="Expressed in granulocyte and 109 other cell types or tissues"/>
</dbReference>
<dbReference type="GO" id="GO:0009986">
    <property type="term" value="C:cell surface"/>
    <property type="evidence" value="ECO:0000314"/>
    <property type="project" value="UniProt"/>
</dbReference>
<dbReference type="GO" id="GO:0005737">
    <property type="term" value="C:cytoplasm"/>
    <property type="evidence" value="ECO:0000304"/>
    <property type="project" value="ProtInc"/>
</dbReference>
<dbReference type="GO" id="GO:0009897">
    <property type="term" value="C:external side of plasma membrane"/>
    <property type="evidence" value="ECO:0000318"/>
    <property type="project" value="GO_Central"/>
</dbReference>
<dbReference type="GO" id="GO:0005886">
    <property type="term" value="C:plasma membrane"/>
    <property type="evidence" value="ECO:0000314"/>
    <property type="project" value="UniProtKB"/>
</dbReference>
<dbReference type="GO" id="GO:0019957">
    <property type="term" value="F:C-C chemokine binding"/>
    <property type="evidence" value="ECO:0000318"/>
    <property type="project" value="GO_Central"/>
</dbReference>
<dbReference type="GO" id="GO:0016493">
    <property type="term" value="F:C-C chemokine receptor activity"/>
    <property type="evidence" value="ECO:0000318"/>
    <property type="project" value="GO_Central"/>
</dbReference>
<dbReference type="GO" id="GO:0019958">
    <property type="term" value="F:C-X-C chemokine binding"/>
    <property type="evidence" value="ECO:0000314"/>
    <property type="project" value="UniProtKB"/>
</dbReference>
<dbReference type="GO" id="GO:0016494">
    <property type="term" value="F:C-X-C chemokine receptor activity"/>
    <property type="evidence" value="ECO:0007669"/>
    <property type="project" value="Ensembl"/>
</dbReference>
<dbReference type="GO" id="GO:0019956">
    <property type="term" value="F:chemokine binding"/>
    <property type="evidence" value="ECO:0000353"/>
    <property type="project" value="BHF-UCL"/>
</dbReference>
<dbReference type="GO" id="GO:0004950">
    <property type="term" value="F:chemokine receptor activity"/>
    <property type="evidence" value="ECO:0000304"/>
    <property type="project" value="ProtInc"/>
</dbReference>
<dbReference type="GO" id="GO:0038023">
    <property type="term" value="F:signaling receptor activity"/>
    <property type="evidence" value="ECO:0000314"/>
    <property type="project" value="UniProtKB"/>
</dbReference>
<dbReference type="GO" id="GO:0007189">
    <property type="term" value="P:adenylate cyclase-activating G protein-coupled receptor signaling pathway"/>
    <property type="evidence" value="ECO:0000314"/>
    <property type="project" value="UniProtKB"/>
</dbReference>
<dbReference type="GO" id="GO:0001525">
    <property type="term" value="P:angiogenesis"/>
    <property type="evidence" value="ECO:0007669"/>
    <property type="project" value="UniProtKB-KW"/>
</dbReference>
<dbReference type="GO" id="GO:0006915">
    <property type="term" value="P:apoptotic process"/>
    <property type="evidence" value="ECO:0007669"/>
    <property type="project" value="UniProtKB-KW"/>
</dbReference>
<dbReference type="GO" id="GO:0019722">
    <property type="term" value="P:calcium-mediated signaling"/>
    <property type="evidence" value="ECO:0000318"/>
    <property type="project" value="GO_Central"/>
</dbReference>
<dbReference type="GO" id="GO:0007155">
    <property type="term" value="P:cell adhesion"/>
    <property type="evidence" value="ECO:0000304"/>
    <property type="project" value="ProtInc"/>
</dbReference>
<dbReference type="GO" id="GO:0060326">
    <property type="term" value="P:cell chemotaxis"/>
    <property type="evidence" value="ECO:0000318"/>
    <property type="project" value="GO_Central"/>
</dbReference>
<dbReference type="GO" id="GO:0007166">
    <property type="term" value="P:cell surface receptor signaling pathway"/>
    <property type="evidence" value="ECO:0000314"/>
    <property type="project" value="BHF-UCL"/>
</dbReference>
<dbReference type="GO" id="GO:0006935">
    <property type="term" value="P:chemotaxis"/>
    <property type="evidence" value="ECO:0000304"/>
    <property type="project" value="ProtInc"/>
</dbReference>
<dbReference type="GO" id="GO:0007186">
    <property type="term" value="P:G protein-coupled receptor signaling pathway"/>
    <property type="evidence" value="ECO:0000315"/>
    <property type="project" value="UniProtKB"/>
</dbReference>
<dbReference type="GO" id="GO:0006955">
    <property type="term" value="P:immune response"/>
    <property type="evidence" value="ECO:0000318"/>
    <property type="project" value="GO_Central"/>
</dbReference>
<dbReference type="GO" id="GO:0006954">
    <property type="term" value="P:inflammatory response"/>
    <property type="evidence" value="ECO:0007669"/>
    <property type="project" value="InterPro"/>
</dbReference>
<dbReference type="GO" id="GO:0016525">
    <property type="term" value="P:negative regulation of angiogenesis"/>
    <property type="evidence" value="ECO:0000314"/>
    <property type="project" value="UniProtKB"/>
</dbReference>
<dbReference type="GO" id="GO:0001937">
    <property type="term" value="P:negative regulation of endothelial cell proliferation"/>
    <property type="evidence" value="ECO:0000314"/>
    <property type="project" value="UniProtKB"/>
</dbReference>
<dbReference type="GO" id="GO:1900118">
    <property type="term" value="P:negative regulation of execution phase of apoptosis"/>
    <property type="evidence" value="ECO:0000314"/>
    <property type="project" value="UniProtKB"/>
</dbReference>
<dbReference type="GO" id="GO:0045766">
    <property type="term" value="P:positive regulation of angiogenesis"/>
    <property type="evidence" value="ECO:0000314"/>
    <property type="project" value="UniProtKB"/>
</dbReference>
<dbReference type="GO" id="GO:0008284">
    <property type="term" value="P:positive regulation of cell population proliferation"/>
    <property type="evidence" value="ECO:0000314"/>
    <property type="project" value="UniProtKB"/>
</dbReference>
<dbReference type="GO" id="GO:0050921">
    <property type="term" value="P:positive regulation of chemotaxis"/>
    <property type="evidence" value="ECO:0000314"/>
    <property type="project" value="UniProtKB"/>
</dbReference>
<dbReference type="GO" id="GO:0007204">
    <property type="term" value="P:positive regulation of cytosolic calcium ion concentration"/>
    <property type="evidence" value="ECO:0000318"/>
    <property type="project" value="GO_Central"/>
</dbReference>
<dbReference type="GO" id="GO:1900119">
    <property type="term" value="P:positive regulation of execution phase of apoptosis"/>
    <property type="evidence" value="ECO:0000314"/>
    <property type="project" value="UniProtKB"/>
</dbReference>
<dbReference type="GO" id="GO:0051281">
    <property type="term" value="P:positive regulation of release of sequestered calcium ion into cytosol"/>
    <property type="evidence" value="ECO:0000315"/>
    <property type="project" value="UniProtKB"/>
</dbReference>
<dbReference type="GO" id="GO:0045944">
    <property type="term" value="P:positive regulation of transcription by RNA polymerase II"/>
    <property type="evidence" value="ECO:0000314"/>
    <property type="project" value="UniProtKB"/>
</dbReference>
<dbReference type="GO" id="GO:0030155">
    <property type="term" value="P:regulation of cell adhesion"/>
    <property type="evidence" value="ECO:0000314"/>
    <property type="project" value="UniProtKB"/>
</dbReference>
<dbReference type="GO" id="GO:0002685">
    <property type="term" value="P:regulation of leukocyte migration"/>
    <property type="evidence" value="ECO:0007669"/>
    <property type="project" value="InterPro"/>
</dbReference>
<dbReference type="GO" id="GO:0010818">
    <property type="term" value="P:T cell chemotaxis"/>
    <property type="evidence" value="ECO:0007669"/>
    <property type="project" value="Ensembl"/>
</dbReference>
<dbReference type="CDD" id="cd15180">
    <property type="entry name" value="7tmA_CXCR3"/>
    <property type="match status" value="1"/>
</dbReference>
<dbReference type="FunFam" id="1.20.1070.10:FF:000159">
    <property type="entry name" value="C-X-C chemokine receptor type 3"/>
    <property type="match status" value="1"/>
</dbReference>
<dbReference type="Gene3D" id="1.20.1070.10">
    <property type="entry name" value="Rhodopsin 7-helix transmembrane proteins"/>
    <property type="match status" value="1"/>
</dbReference>
<dbReference type="InterPro" id="IPR050119">
    <property type="entry name" value="CCR1-9-like"/>
</dbReference>
<dbReference type="InterPro" id="IPR004070">
    <property type="entry name" value="Chemokine_CXCR3"/>
</dbReference>
<dbReference type="InterPro" id="IPR000355">
    <property type="entry name" value="Chemokine_rcpt"/>
</dbReference>
<dbReference type="InterPro" id="IPR000276">
    <property type="entry name" value="GPCR_Rhodpsn"/>
</dbReference>
<dbReference type="InterPro" id="IPR017452">
    <property type="entry name" value="GPCR_Rhodpsn_7TM"/>
</dbReference>
<dbReference type="PANTHER" id="PTHR10489:SF671">
    <property type="entry name" value="C-X-C CHEMOKINE RECEPTOR TYPE 3"/>
    <property type="match status" value="1"/>
</dbReference>
<dbReference type="PANTHER" id="PTHR10489">
    <property type="entry name" value="CELL ADHESION MOLECULE"/>
    <property type="match status" value="1"/>
</dbReference>
<dbReference type="Pfam" id="PF00001">
    <property type="entry name" value="7tm_1"/>
    <property type="match status" value="1"/>
</dbReference>
<dbReference type="PRINTS" id="PR00657">
    <property type="entry name" value="CCCHEMOKINER"/>
</dbReference>
<dbReference type="PRINTS" id="PR01532">
    <property type="entry name" value="CXCCHMKINER3"/>
</dbReference>
<dbReference type="PRINTS" id="PR00237">
    <property type="entry name" value="GPCRRHODOPSN"/>
</dbReference>
<dbReference type="SUPFAM" id="SSF81321">
    <property type="entry name" value="Family A G protein-coupled receptor-like"/>
    <property type="match status" value="1"/>
</dbReference>
<dbReference type="PROSITE" id="PS00237">
    <property type="entry name" value="G_PROTEIN_RECEP_F1_1"/>
    <property type="match status" value="1"/>
</dbReference>
<dbReference type="PROSITE" id="PS50262">
    <property type="entry name" value="G_PROTEIN_RECEP_F1_2"/>
    <property type="match status" value="1"/>
</dbReference>
<reference key="1">
    <citation type="journal article" date="1996" name="J. Exp. Med.">
        <title>Chemokine receptor specific for IP10 and mig: structure, function, and expression in activated T-lymphocytes.</title>
        <authorList>
            <person name="Loetscher M."/>
            <person name="Gerber B."/>
            <person name="Loetscher P."/>
            <person name="Jones S.A."/>
            <person name="Piali L."/>
            <person name="Clark-Lewis I."/>
            <person name="Baggiolini M."/>
            <person name="Moser B."/>
        </authorList>
    </citation>
    <scope>NUCLEOTIDE SEQUENCE [MRNA] (ISOFORM 1)</scope>
    <source>
        <tissue>Blood</tissue>
    </source>
</reference>
<reference key="2">
    <citation type="journal article" date="2003" name="J. Exp. Med.">
        <title>An alternatively spliced variant of CXCR3 mediates the inhibition of endothelial cell growth induced by IP-10, Mig, and I-TAC, and acts as functional receptor for platelet factor 4.</title>
        <authorList>
            <person name="Lasagni L."/>
            <person name="Francalanci M."/>
            <person name="Annunziato F."/>
            <person name="Lazzeri E."/>
            <person name="Giannini S."/>
            <person name="Cosmi L."/>
            <person name="Sagrinati C."/>
            <person name="Mazzinghi B."/>
            <person name="Orlando C."/>
            <person name="Maggi E."/>
            <person name="Marra F."/>
            <person name="Romagnani S."/>
            <person name="Serio M."/>
            <person name="Romagnani P."/>
        </authorList>
    </citation>
    <scope>NUCLEOTIDE SEQUENCE [MRNA] (ISOFORM 2)</scope>
    <scope>FUNCTION (ISOFORMS 1 AND 2)</scope>
    <scope>SUBCELLULAR LOCATION (ISOFORMS 1 AND 2)</scope>
    <scope>TISSUE SPECIFICITY</scope>
</reference>
<reference key="3">
    <citation type="journal article" date="2008" name="Int. J. Biochem. Cell Biol.">
        <title>Activation of p38(MAPK) mediates the angiostatic effect of the chemokine receptor CXCR3-B.</title>
        <authorList>
            <person name="Petrai I."/>
            <person name="Rombouts K."/>
            <person name="Lasagni L."/>
            <person name="Annunziato F."/>
            <person name="Cosmi L."/>
            <person name="Romanelli R.G."/>
            <person name="Sagrinati C."/>
            <person name="Mazzinghi B."/>
            <person name="Pinzani M."/>
            <person name="Romagnani S."/>
            <person name="Romagnani P."/>
            <person name="Marra F."/>
        </authorList>
    </citation>
    <scope>NUCLEOTIDE SEQUENCE [MRNA] (ISOFORMS 1 AND 2)</scope>
    <scope>FUNCTION</scope>
    <source>
        <tissue>Endothelial cell</tissue>
        <tissue>Thymus</tissue>
    </source>
</reference>
<reference key="4">
    <citation type="submission" date="1996-09" db="EMBL/GenBank/DDBJ databases">
        <authorList>
            <person name="Gutierrez J."/>
            <person name="Varona R."/>
            <person name="Zaballos A."/>
            <person name="Lind P."/>
            <person name="Marquez G."/>
        </authorList>
    </citation>
    <scope>NUCLEOTIDE SEQUENCE [GENOMIC DNA] (ISOFORM 2)</scope>
</reference>
<reference key="5">
    <citation type="submission" date="2003-02" db="EMBL/GenBank/DDBJ databases">
        <title>cDNA clones of human proteins involved in signal transduction sequenced by the Guthrie cDNA resource center (www.cdna.org).</title>
        <authorList>
            <person name="Warren C.N."/>
            <person name="Aronstam R.S."/>
            <person name="Sharma S.V."/>
        </authorList>
    </citation>
    <scope>NUCLEOTIDE SEQUENCE [LARGE SCALE MRNA] (ISOFORM 1)</scope>
    <source>
        <tissue>Leukocyte</tissue>
    </source>
</reference>
<reference key="6">
    <citation type="journal article" date="2004" name="Nat. Genet.">
        <title>Complete sequencing and characterization of 21,243 full-length human cDNAs.</title>
        <authorList>
            <person name="Ota T."/>
            <person name="Suzuki Y."/>
            <person name="Nishikawa T."/>
            <person name="Otsuki T."/>
            <person name="Sugiyama T."/>
            <person name="Irie R."/>
            <person name="Wakamatsu A."/>
            <person name="Hayashi K."/>
            <person name="Sato H."/>
            <person name="Nagai K."/>
            <person name="Kimura K."/>
            <person name="Makita H."/>
            <person name="Sekine M."/>
            <person name="Obayashi M."/>
            <person name="Nishi T."/>
            <person name="Shibahara T."/>
            <person name="Tanaka T."/>
            <person name="Ishii S."/>
            <person name="Yamamoto J."/>
            <person name="Saito K."/>
            <person name="Kawai Y."/>
            <person name="Isono Y."/>
            <person name="Nakamura Y."/>
            <person name="Nagahari K."/>
            <person name="Murakami K."/>
            <person name="Yasuda T."/>
            <person name="Iwayanagi T."/>
            <person name="Wagatsuma M."/>
            <person name="Shiratori A."/>
            <person name="Sudo H."/>
            <person name="Hosoiri T."/>
            <person name="Kaku Y."/>
            <person name="Kodaira H."/>
            <person name="Kondo H."/>
            <person name="Sugawara M."/>
            <person name="Takahashi M."/>
            <person name="Kanda K."/>
            <person name="Yokoi T."/>
            <person name="Furuya T."/>
            <person name="Kikkawa E."/>
            <person name="Omura Y."/>
            <person name="Abe K."/>
            <person name="Kamihara K."/>
            <person name="Katsuta N."/>
            <person name="Sato K."/>
            <person name="Tanikawa M."/>
            <person name="Yamazaki M."/>
            <person name="Ninomiya K."/>
            <person name="Ishibashi T."/>
            <person name="Yamashita H."/>
            <person name="Murakawa K."/>
            <person name="Fujimori K."/>
            <person name="Tanai H."/>
            <person name="Kimata M."/>
            <person name="Watanabe M."/>
            <person name="Hiraoka S."/>
            <person name="Chiba Y."/>
            <person name="Ishida S."/>
            <person name="Ono Y."/>
            <person name="Takiguchi S."/>
            <person name="Watanabe S."/>
            <person name="Yosida M."/>
            <person name="Hotuta T."/>
            <person name="Kusano J."/>
            <person name="Kanehori K."/>
            <person name="Takahashi-Fujii A."/>
            <person name="Hara H."/>
            <person name="Tanase T.-O."/>
            <person name="Nomura Y."/>
            <person name="Togiya S."/>
            <person name="Komai F."/>
            <person name="Hara R."/>
            <person name="Takeuchi K."/>
            <person name="Arita M."/>
            <person name="Imose N."/>
            <person name="Musashino K."/>
            <person name="Yuuki H."/>
            <person name="Oshima A."/>
            <person name="Sasaki N."/>
            <person name="Aotsuka S."/>
            <person name="Yoshikawa Y."/>
            <person name="Matsunawa H."/>
            <person name="Ichihara T."/>
            <person name="Shiohata N."/>
            <person name="Sano S."/>
            <person name="Moriya S."/>
            <person name="Momiyama H."/>
            <person name="Satoh N."/>
            <person name="Takami S."/>
            <person name="Terashima Y."/>
            <person name="Suzuki O."/>
            <person name="Nakagawa S."/>
            <person name="Senoh A."/>
            <person name="Mizoguchi H."/>
            <person name="Goto Y."/>
            <person name="Shimizu F."/>
            <person name="Wakebe H."/>
            <person name="Hishigaki H."/>
            <person name="Watanabe T."/>
            <person name="Sugiyama A."/>
            <person name="Takemoto M."/>
            <person name="Kawakami B."/>
            <person name="Yamazaki M."/>
            <person name="Watanabe K."/>
            <person name="Kumagai A."/>
            <person name="Itakura S."/>
            <person name="Fukuzumi Y."/>
            <person name="Fujimori Y."/>
            <person name="Komiyama M."/>
            <person name="Tashiro H."/>
            <person name="Tanigami A."/>
            <person name="Fujiwara T."/>
            <person name="Ono T."/>
            <person name="Yamada K."/>
            <person name="Fujii Y."/>
            <person name="Ozaki K."/>
            <person name="Hirao M."/>
            <person name="Ohmori Y."/>
            <person name="Kawabata A."/>
            <person name="Hikiji T."/>
            <person name="Kobatake N."/>
            <person name="Inagaki H."/>
            <person name="Ikema Y."/>
            <person name="Okamoto S."/>
            <person name="Okitani R."/>
            <person name="Kawakami T."/>
            <person name="Noguchi S."/>
            <person name="Itoh T."/>
            <person name="Shigeta K."/>
            <person name="Senba T."/>
            <person name="Matsumura K."/>
            <person name="Nakajima Y."/>
            <person name="Mizuno T."/>
            <person name="Morinaga M."/>
            <person name="Sasaki M."/>
            <person name="Togashi T."/>
            <person name="Oyama M."/>
            <person name="Hata H."/>
            <person name="Watanabe M."/>
            <person name="Komatsu T."/>
            <person name="Mizushima-Sugano J."/>
            <person name="Satoh T."/>
            <person name="Shirai Y."/>
            <person name="Takahashi Y."/>
            <person name="Nakagawa K."/>
            <person name="Okumura K."/>
            <person name="Nagase T."/>
            <person name="Nomura N."/>
            <person name="Kikuchi H."/>
            <person name="Masuho Y."/>
            <person name="Yamashita R."/>
            <person name="Nakai K."/>
            <person name="Yada T."/>
            <person name="Nakamura Y."/>
            <person name="Ohara O."/>
            <person name="Isogai T."/>
            <person name="Sugano S."/>
        </authorList>
    </citation>
    <scope>NUCLEOTIDE SEQUENCE [LARGE SCALE MRNA] (ISOFORM 1)</scope>
    <source>
        <tissue>Colon</tissue>
    </source>
</reference>
<reference key="7">
    <citation type="journal article" date="2004" name="Genome Res.">
        <title>The status, quality, and expansion of the NIH full-length cDNA project: the Mammalian Gene Collection (MGC).</title>
        <authorList>
            <consortium name="The MGC Project Team"/>
        </authorList>
    </citation>
    <scope>NUCLEOTIDE SEQUENCE [LARGE SCALE MRNA] (ISOFORM 1)</scope>
    <source>
        <tissue>Brain</tissue>
        <tissue>Lung</tissue>
        <tissue>Testis</tissue>
    </source>
</reference>
<reference key="8">
    <citation type="journal article" date="1995" name="Genomics">
        <title>Cloning and chromosomal mapping of three novel genes, GPR9, GPR10, and GPR14, encoding receptors related to interleukin 8, neuropeptide Y, and somatostatin receptors.</title>
        <authorList>
            <person name="Marchese A."/>
            <person name="Heiber M."/>
            <person name="Nguyen T."/>
            <person name="Heng H.H.Q."/>
            <person name="Saldivia V.R."/>
            <person name="Cheng R."/>
            <person name="Murphy P.M."/>
            <person name="Tsui L.-C."/>
            <person name="Shi X."/>
            <person name="Gregor P."/>
            <person name="George S.R."/>
            <person name="O'Dowd B.F."/>
            <person name="Docherty J.M."/>
        </authorList>
    </citation>
    <scope>NUCLEOTIDE SEQUENCE [GENOMIC DNA] OF 5-368</scope>
</reference>
<reference key="9">
    <citation type="journal article" date="2000" name="Genes Immun.">
        <title>Single nucleotide polymorphisms in the coding regions of human CXC-chemokine receptors CXCR1, CXCR2 and CXCR3.</title>
        <authorList>
            <person name="Kato H."/>
            <person name="Tsuchiya N."/>
            <person name="Tokunaga K."/>
        </authorList>
    </citation>
    <scope>NUCLEOTIDE SEQUENCE [GENOMIC DNA] OF 278-368</scope>
    <scope>VARIANTS GLN-292 AND THR-363</scope>
</reference>
<reference key="10">
    <citation type="journal article" date="2004" name="J. Immunol.">
        <title>Identification and partial characterization of a variant of human CXCR3 generated by posttranscriptional exon skipping.</title>
        <authorList>
            <person name="Ehlert J.E."/>
            <person name="Addison C.A."/>
            <person name="Burdick M.D."/>
            <person name="Kunkel S.L."/>
            <person name="Strieter R.M."/>
        </authorList>
    </citation>
    <scope>ALTERNATIVE SPLICING (ISOFORM 3)</scope>
    <scope>FUNCTION</scope>
</reference>
<reference key="11">
    <citation type="journal article" date="1998" name="J. Exp. Med.">
        <title>Interferon-inducible T cell alpha chemoattractant (I-TAC): a novel non-ELR CXC chemokine with potent activity on activated T cells through selective high affinity binding to CXCR3.</title>
        <authorList>
            <person name="Cole K.E."/>
            <person name="Strick C.A."/>
            <person name="Paradis T.J."/>
            <person name="Ogborne K.T."/>
            <person name="Loetscher M."/>
            <person name="Gladue R.P."/>
            <person name="Lin W."/>
            <person name="Boyd J.G."/>
            <person name="Moser B."/>
            <person name="Wood D.E."/>
            <person name="Sahagan B.G."/>
            <person name="Neote K."/>
        </authorList>
    </citation>
    <scope>LIGAND-BINDING</scope>
    <source>
        <tissue>Fetal astrocyte</tissue>
    </source>
</reference>
<reference key="12">
    <citation type="journal article" date="2006" name="Mol. Cell. Biol.">
        <title>CXCR3 requires tyrosine sulfation for ligand binding and a second extracellular loop arginine residue for ligand-induced chemotaxis.</title>
        <authorList>
            <person name="Colvin R.A."/>
            <person name="Campanella G.S."/>
            <person name="Manice L.A."/>
            <person name="Luster A.D."/>
        </authorList>
    </citation>
    <scope>SULFATION AT TYR-27</scope>
    <scope>MUTAGENESIS OF 1-MET--VAL-16; GLU-4; GLU-21; TYR-27; 27-TYR--TYR-29; TYR-29; ASP-112; ARG-197; ARG-212; ARG-216; ASP-278; ASP-282 AND GLU-293</scope>
</reference>
<reference key="13">
    <citation type="journal article" date="2008" name="J. Leukoc. Biol.">
        <title>CXCL4-induced migration of activated T lymphocytes is mediated by the chemokine receptor CXCR3.</title>
        <authorList>
            <person name="Mueller A."/>
            <person name="Meiser A."/>
            <person name="McDonagh E.M."/>
            <person name="Fox J.M."/>
            <person name="Petit S.J."/>
            <person name="Xanthou G."/>
            <person name="Williams T.J."/>
            <person name="Pease J.E."/>
        </authorList>
    </citation>
    <scope>FUNCTION (ISOFORM 1)</scope>
    <scope>INTERACTION WITH PF4 (ISOFORM 1 AND 2)</scope>
</reference>
<reference key="14">
    <citation type="journal article" date="2009" name="Acta Pharmacol. Sin.">
        <title>Sulfated tyrosines 27 and 29 in the N-terminus of human CXCR3 participate in binding native IP-10.</title>
        <authorList>
            <person name="Gao J.M."/>
            <person name="Xiang R.L."/>
            <person name="Jiang L."/>
            <person name="Li W.H."/>
            <person name="Feng Q.P."/>
            <person name="Guo Z.J."/>
            <person name="Sun Q."/>
            <person name="Zeng Z.P."/>
            <person name="Fang F.D."/>
        </authorList>
    </citation>
    <scope>SULFATION AT TYR-27 AND TYR-29</scope>
    <scope>MUTAGENESIS OF TYR-27 AND TYR-29</scope>
</reference>
<reference key="15">
    <citation type="journal article" date="2010" name="J. Biol. Chem.">
        <title>CXCR3-B can mediate growth-inhibitory signals in human renal cancer cells by down-regulating the expression of heme oxygenase-1.</title>
        <authorList>
            <person name="Datta D."/>
            <person name="Banerjee P."/>
            <person name="Gasser M."/>
            <person name="Waaga-Gasser A.M."/>
            <person name="Pal S."/>
        </authorList>
    </citation>
    <scope>FUNCTION</scope>
</reference>
<reference key="16">
    <citation type="journal article" date="2013" name="Br. J. Pharmacol.">
        <title>Inhibition of CXCR3-mediated chemotaxis by the human chemokine receptor-like protein CCX-CKR.</title>
        <authorList>
            <person name="Vinet J."/>
            <person name="van Zwam M."/>
            <person name="Dijkstra I.M."/>
            <person name="Brouwer N."/>
            <person name="van Weering H.R."/>
            <person name="Watts A."/>
            <person name="Meijer M."/>
            <person name="Fokkens M.R."/>
            <person name="Kannan V."/>
            <person name="Verzijl D."/>
            <person name="Vischer H.F."/>
            <person name="Smit M.J."/>
            <person name="Leurs R."/>
            <person name="Biber K."/>
            <person name="Boddeke H.W."/>
        </authorList>
    </citation>
    <scope>SUBUNIT</scope>
    <scope>TISSUE SPECIFICITY</scope>
</reference>
<reference key="17">
    <citation type="journal article" date="2014" name="Angiogenesis">
        <title>CXCL4L1 and CXCL4 signaling in human lymphatic and microvascular endothelial cells and activated lymphocytes: involvement of mitogen-activated protein (MAP) kinases, Src and p70S6 kinase.</title>
        <authorList>
            <person name="Van Raemdonck K."/>
            <person name="Gouwy M."/>
            <person name="Lepers S.A."/>
            <person name="Van Damme J."/>
            <person name="Struyf S."/>
        </authorList>
    </citation>
    <scope>FUNCTION (ISOFORM 1)</scope>
</reference>